<sequence>MAPHLNIVPSMFVLLLLFISASKVQPDAFDVVAKFGAKADGKTDLSKPFLDAWKEACASVTPSTVVIPKGTYLLSKVNLEGPCKAPIEINVQGTIQAPADPSAFKDPNWVRFYSVENFKMFGGGIFDGQGSIAYEKNTCENREFRSKLPVNIRFDFVTNALIQDITSKDSKLFHINVFACKNITLERLKIEAPDESPNTDGIHMGKSEGVNIIASDIKTGDDCISIGDGTKNMVIKEITCGPGHGISIGSLGKFQNEEPVEGIKISNCTITNTSNGARIKTWPGEHGGAVSEIHFEDITMNNVSSPILIDQQYCPWNKCKKNEESKVKLSNISFKNIRGTSALPEAIKFICSGSSPCQNVELADIDIQHNGAEPATSQCLNVKPITIGKLNPIPCSGPVPKTPSATA</sequence>
<feature type="signal peptide" evidence="3">
    <location>
        <begin position="1"/>
        <end position="26"/>
    </location>
</feature>
<feature type="chain" id="PRO_0000024802" description="Polygalacturonase">
    <location>
        <begin position="27"/>
        <end position="407"/>
    </location>
</feature>
<feature type="repeat" description="PbH1 1" evidence="3">
    <location>
        <begin position="180"/>
        <end position="206"/>
    </location>
</feature>
<feature type="repeat" description="PbH1 2" evidence="3">
    <location>
        <begin position="207"/>
        <end position="228"/>
    </location>
</feature>
<feature type="repeat" description="PbH1 3" evidence="3">
    <location>
        <begin position="260"/>
        <end position="281"/>
    </location>
</feature>
<feature type="repeat" description="PbH1 4" evidence="3">
    <location>
        <begin position="290"/>
        <end position="311"/>
    </location>
</feature>
<feature type="repeat" description="PbH1 5" evidence="3">
    <location>
        <begin position="357"/>
        <end position="384"/>
    </location>
</feature>
<feature type="active site" description="Proton donor" evidence="2">
    <location>
        <position position="221"/>
    </location>
</feature>
<feature type="active site" evidence="5">
    <location>
        <position position="244"/>
    </location>
</feature>
<feature type="glycosylation site" description="N-linked (GlcNAc...) asparagine" evidence="4">
    <location>
        <position position="182"/>
    </location>
</feature>
<feature type="glycosylation site" description="N-linked (GlcNAc...) asparagine" evidence="4">
    <location>
        <position position="267"/>
    </location>
</feature>
<feature type="glycosylation site" description="N-linked (GlcNAc...) asparagine" evidence="4">
    <location>
        <position position="272"/>
    </location>
</feature>
<feature type="glycosylation site" description="N-linked (GlcNAc...) asparagine" evidence="4">
    <location>
        <position position="302"/>
    </location>
</feature>
<feature type="glycosylation site" description="N-linked (GlcNAc...) asparagine" evidence="4">
    <location>
        <position position="331"/>
    </location>
</feature>
<feature type="disulfide bond" evidence="2">
    <location>
        <begin position="223"/>
        <end position="240"/>
    </location>
</feature>
<feature type="disulfide bond" evidence="2">
    <location>
        <begin position="351"/>
        <end position="357"/>
    </location>
</feature>
<feature type="disulfide bond" evidence="2">
    <location>
        <begin position="379"/>
        <end position="395"/>
    </location>
</feature>
<evidence type="ECO:0000250" key="1"/>
<evidence type="ECO:0000250" key="2">
    <source>
        <dbReference type="UniProtKB" id="O74213"/>
    </source>
</evidence>
<evidence type="ECO:0000255" key="3"/>
<evidence type="ECO:0000255" key="4">
    <source>
        <dbReference type="PROSITE-ProRule" id="PRU00498"/>
    </source>
</evidence>
<evidence type="ECO:0000255" key="5">
    <source>
        <dbReference type="PROSITE-ProRule" id="PRU10052"/>
    </source>
</evidence>
<evidence type="ECO:0000305" key="6"/>
<keyword id="KW-0134">Cell wall</keyword>
<keyword id="KW-0961">Cell wall biogenesis/degradation</keyword>
<keyword id="KW-1015">Disulfide bond</keyword>
<keyword id="KW-0325">Glycoprotein</keyword>
<keyword id="KW-0326">Glycosidase</keyword>
<keyword id="KW-0378">Hydrolase</keyword>
<keyword id="KW-0677">Repeat</keyword>
<keyword id="KW-0964">Secreted</keyword>
<keyword id="KW-0732">Signal</keyword>
<reference key="1">
    <citation type="journal article" date="1994" name="Plant Mol. Biol.">
        <title>Cotton (Gossypium hirsutum L.) pollen-specific polygalacturonase mRNA: tissue and temporal specificity of its promoter in transgenic tobacco.</title>
        <authorList>
            <person name="John M.E."/>
            <person name="Petersen M.W."/>
        </authorList>
    </citation>
    <scope>NUCLEOTIDE SEQUENCE</scope>
    <source>
        <tissue>Pollen</tissue>
    </source>
</reference>
<proteinExistence type="evidence at transcript level"/>
<dbReference type="EC" id="3.2.1.15"/>
<dbReference type="EMBL" id="U09805">
    <property type="protein sequence ID" value="AAA58322.1"/>
    <property type="molecule type" value="Unassigned_DNA"/>
</dbReference>
<dbReference type="SMR" id="Q39766"/>
<dbReference type="CAZy" id="GH28">
    <property type="family name" value="Glycoside Hydrolase Family 28"/>
</dbReference>
<dbReference type="GlyCosmos" id="Q39766">
    <property type="glycosylation" value="5 sites, No reported glycans"/>
</dbReference>
<dbReference type="GO" id="GO:0005576">
    <property type="term" value="C:extracellular region"/>
    <property type="evidence" value="ECO:0007669"/>
    <property type="project" value="UniProtKB-SubCell"/>
</dbReference>
<dbReference type="GO" id="GO:0004650">
    <property type="term" value="F:polygalacturonase activity"/>
    <property type="evidence" value="ECO:0007669"/>
    <property type="project" value="UniProtKB-EC"/>
</dbReference>
<dbReference type="GO" id="GO:0005975">
    <property type="term" value="P:carbohydrate metabolic process"/>
    <property type="evidence" value="ECO:0007669"/>
    <property type="project" value="InterPro"/>
</dbReference>
<dbReference type="GO" id="GO:0071555">
    <property type="term" value="P:cell wall organization"/>
    <property type="evidence" value="ECO:0007669"/>
    <property type="project" value="UniProtKB-KW"/>
</dbReference>
<dbReference type="FunFam" id="2.160.20.10:FF:000004">
    <property type="entry name" value="Pectin lyase-like superfamily protein"/>
    <property type="match status" value="1"/>
</dbReference>
<dbReference type="Gene3D" id="2.160.20.10">
    <property type="entry name" value="Single-stranded right-handed beta-helix, Pectin lyase-like"/>
    <property type="match status" value="1"/>
</dbReference>
<dbReference type="InterPro" id="IPR000743">
    <property type="entry name" value="Glyco_hydro_28"/>
</dbReference>
<dbReference type="InterPro" id="IPR006626">
    <property type="entry name" value="PbH1"/>
</dbReference>
<dbReference type="InterPro" id="IPR012334">
    <property type="entry name" value="Pectin_lyas_fold"/>
</dbReference>
<dbReference type="InterPro" id="IPR011050">
    <property type="entry name" value="Pectin_lyase_fold/virulence"/>
</dbReference>
<dbReference type="PANTHER" id="PTHR31375">
    <property type="match status" value="1"/>
</dbReference>
<dbReference type="Pfam" id="PF00295">
    <property type="entry name" value="Glyco_hydro_28"/>
    <property type="match status" value="1"/>
</dbReference>
<dbReference type="SMART" id="SM00710">
    <property type="entry name" value="PbH1"/>
    <property type="match status" value="5"/>
</dbReference>
<dbReference type="SUPFAM" id="SSF51126">
    <property type="entry name" value="Pectin lyase-like"/>
    <property type="match status" value="1"/>
</dbReference>
<dbReference type="PROSITE" id="PS00502">
    <property type="entry name" value="POLYGALACTURONASE"/>
    <property type="match status" value="1"/>
</dbReference>
<organism>
    <name type="scientific">Gossypium barbadense</name>
    <name type="common">Sea Island cotton</name>
    <name type="synonym">Hibiscus barbadensis</name>
    <dbReference type="NCBI Taxonomy" id="3634"/>
    <lineage>
        <taxon>Eukaryota</taxon>
        <taxon>Viridiplantae</taxon>
        <taxon>Streptophyta</taxon>
        <taxon>Embryophyta</taxon>
        <taxon>Tracheophyta</taxon>
        <taxon>Spermatophyta</taxon>
        <taxon>Magnoliopsida</taxon>
        <taxon>eudicotyledons</taxon>
        <taxon>Gunneridae</taxon>
        <taxon>Pentapetalae</taxon>
        <taxon>rosids</taxon>
        <taxon>malvids</taxon>
        <taxon>Malvales</taxon>
        <taxon>Malvaceae</taxon>
        <taxon>Malvoideae</taxon>
        <taxon>Gossypium</taxon>
    </lineage>
</organism>
<comment type="function">
    <text>May function in the depolymerization of the pectin in its walls during pollen tube elongation, or in that of the pistil during pollination.</text>
</comment>
<comment type="catalytic activity">
    <reaction>
        <text>(1,4-alpha-D-galacturonosyl)n+m + H2O = (1,4-alpha-D-galacturonosyl)n + (1,4-alpha-D-galacturonosyl)m.</text>
        <dbReference type="EC" id="3.2.1.15"/>
    </reaction>
</comment>
<comment type="subcellular location">
    <subcellularLocation>
        <location evidence="1">Secreted</location>
    </subcellularLocation>
    <subcellularLocation>
        <location evidence="1">Secreted</location>
        <location evidence="1">Cell wall</location>
    </subcellularLocation>
</comment>
<comment type="tissue specificity">
    <text>Pollen.</text>
</comment>
<comment type="similarity">
    <text evidence="6">Belongs to the glycosyl hydrolase 28 family.</text>
</comment>
<name>PGLR_GOSBA</name>
<accession>Q39766</accession>
<gene>
    <name type="primary">G9</name>
</gene>
<protein>
    <recommendedName>
        <fullName>Polygalacturonase</fullName>
        <shortName>PG</shortName>
        <ecNumber>3.2.1.15</ecNumber>
    </recommendedName>
    <alternativeName>
        <fullName>Pectinase</fullName>
    </alternativeName>
</protein>